<sequence>MEAGAYLNAIIFVLVATIIAVISRGLTRTEPCTIRITGESITVHACHIDSETIKALANLKPLSLERLSFQ</sequence>
<organismHost>
    <name type="scientific">Brassica campestris</name>
    <name type="common">Field mustard</name>
    <dbReference type="NCBI Taxonomy" id="3711"/>
</organismHost>
<organismHost>
    <name type="scientific">Solanum tuberosum</name>
    <name type="common">Potato</name>
    <dbReference type="NCBI Taxonomy" id="4113"/>
</organismHost>
<feature type="chain" id="PRO_0000222609" description="Movement protein TGBp3">
    <location>
        <begin position="1"/>
        <end position="70"/>
    </location>
</feature>
<feature type="topological domain" description="Lumenal" evidence="2">
    <location>
        <begin position="1"/>
        <end position="4"/>
    </location>
</feature>
<feature type="transmembrane region" description="Helical" evidence="2">
    <location>
        <begin position="5"/>
        <end position="27"/>
    </location>
</feature>
<feature type="topological domain" description="Cytoplasmic" evidence="2">
    <location>
        <begin position="28"/>
        <end position="70"/>
    </location>
</feature>
<dbReference type="EMBL" id="X12804">
    <property type="protein sequence ID" value="CAA31293.1"/>
    <property type="molecule type" value="Genomic_RNA"/>
</dbReference>
<dbReference type="PIR" id="S03197">
    <property type="entry name" value="S03197"/>
</dbReference>
<dbReference type="SMR" id="P68833"/>
<dbReference type="GO" id="GO:0044167">
    <property type="term" value="C:host cell endoplasmic reticulum membrane"/>
    <property type="evidence" value="ECO:0007669"/>
    <property type="project" value="UniProtKB-SubCell"/>
</dbReference>
<dbReference type="GO" id="GO:0016020">
    <property type="term" value="C:membrane"/>
    <property type="evidence" value="ECO:0007669"/>
    <property type="project" value="UniProtKB-KW"/>
</dbReference>
<dbReference type="GO" id="GO:0046740">
    <property type="term" value="P:transport of virus in host, cell to cell"/>
    <property type="evidence" value="ECO:0007669"/>
    <property type="project" value="UniProtKB-KW"/>
</dbReference>
<dbReference type="InterPro" id="IPR003411">
    <property type="entry name" value="TGBp3"/>
</dbReference>
<dbReference type="Pfam" id="PF02495">
    <property type="entry name" value="TGBp3"/>
    <property type="match status" value="1"/>
</dbReference>
<gene>
    <name type="ORF">ORF4</name>
</gene>
<accession>P68833</accession>
<accession>P10467</accession>
<name>TGB3_PVXXC</name>
<organism>
    <name type="scientific">Potato virus X (strain Xc)</name>
    <name type="common">PVX</name>
    <dbReference type="NCBI Taxonomy" id="12186"/>
    <lineage>
        <taxon>Viruses</taxon>
        <taxon>Riboviria</taxon>
        <taxon>Orthornavirae</taxon>
        <taxon>Kitrinoviricota</taxon>
        <taxon>Alsuviricetes</taxon>
        <taxon>Tymovirales</taxon>
        <taxon>Alphaflexiviridae</taxon>
        <taxon>Potexvirus</taxon>
        <taxon>Potato virus X</taxon>
    </lineage>
</organism>
<reference key="1">
    <citation type="journal article" date="1989" name="Nucleic Acids Res.">
        <title>Nucleotide cDNA sequence coding for the PVXc coat protein.</title>
        <authorList>
            <person name="Mandel M.A."/>
            <person name="Orman B.O."/>
            <person name="Celnik R.M."/>
            <person name="Torres H.N."/>
            <person name="Mentaberry A.N."/>
        </authorList>
    </citation>
    <scope>NUCLEOTIDE SEQUENCE [GENOMIC RNA]</scope>
</reference>
<reference key="2">
    <citation type="journal article" date="2005" name="Mol. Plant Microbe Interact.">
        <title>A new cell-to-cell transport model for Potexviruses.</title>
        <authorList>
            <person name="Verchot-Lubicz J."/>
        </authorList>
    </citation>
    <scope>REVIEW</scope>
</reference>
<comment type="function">
    <text evidence="1">Plays a role in viral cell-to-cell propagation, by facilitating genome transport to neighboring plant cells through plasmosdesmata. May induce the formation of granular vesicles derived from the Endoplasmic reticulum, which align on actin filaments (By similarity).</text>
</comment>
<comment type="subcellular location">
    <subcellularLocation>
        <location evidence="1">Host endoplasmic reticulum membrane</location>
    </subcellularLocation>
</comment>
<comment type="miscellaneous">
    <text>TGBp1, TGBp2 and TGBp3 seem to act together for cell-to-cell propagation. TGBp1 is the main movement protein that physically cross the plasmodesma with the viral genome. TGBp2 and TGBp3 would facilitate TGBp1 function.</text>
</comment>
<comment type="similarity">
    <text evidence="3">Belongs to the Tymovirales TGBp3 protein family.</text>
</comment>
<proteinExistence type="inferred from homology"/>
<evidence type="ECO:0000250" key="1"/>
<evidence type="ECO:0000255" key="2"/>
<evidence type="ECO:0000305" key="3"/>
<protein>
    <recommendedName>
        <fullName>Movement protein TGBp3</fullName>
    </recommendedName>
    <alternativeName>
        <fullName>7 kDa protein</fullName>
    </alternativeName>
    <alternativeName>
        <fullName>Triple gene block 3 protein</fullName>
        <shortName>TGBp3</shortName>
    </alternativeName>
</protein>
<keyword id="KW-1038">Host endoplasmic reticulum</keyword>
<keyword id="KW-1043">Host membrane</keyword>
<keyword id="KW-0472">Membrane</keyword>
<keyword id="KW-0812">Transmembrane</keyword>
<keyword id="KW-1133">Transmembrane helix</keyword>
<keyword id="KW-0813">Transport</keyword>
<keyword id="KW-0916">Viral movement protein</keyword>